<comment type="function">
    <text>Major thyroid hormone transport protein in serum.</text>
</comment>
<comment type="subcellular location">
    <subcellularLocation>
        <location>Secreted</location>
    </subcellularLocation>
</comment>
<comment type="tissue specificity">
    <text>Expressed by the liver and secreted in plasma.</text>
</comment>
<comment type="similarity">
    <text evidence="3">Belongs to the serpin family.</text>
</comment>
<accession>P50450</accession>
<protein>
    <recommendedName>
        <fullName>Thyroxine-binding globulin</fullName>
    </recommendedName>
    <alternativeName>
        <fullName>Serpin A7</fullName>
    </alternativeName>
    <alternativeName>
        <fullName>T4-binding globulin</fullName>
    </alternativeName>
</protein>
<feature type="signal peptide" evidence="2">
    <location>
        <begin position="1"/>
        <end position="16"/>
    </location>
</feature>
<feature type="chain" id="PRO_0000032441" description="Thyroxine-binding globulin">
    <location>
        <begin position="17"/>
        <end position="412"/>
    </location>
</feature>
<feature type="binding site" evidence="1">
    <location>
        <position position="292"/>
    </location>
    <ligand>
        <name>thyroxine</name>
        <dbReference type="ChEBI" id="CHEBI:305790"/>
    </ligand>
</feature>
<feature type="binding site" evidence="1">
    <location>
        <position position="395"/>
    </location>
    <ligand>
        <name>thyroxine</name>
        <dbReference type="ChEBI" id="CHEBI:305790"/>
    </ligand>
</feature>
<feature type="glycosylation site" description="N-linked (GlcNAc...) asparagine" evidence="2">
    <location>
        <position position="35"/>
    </location>
</feature>
<feature type="glycosylation site" description="N-linked (GlcNAc...) asparagine" evidence="2">
    <location>
        <position position="98"/>
    </location>
</feature>
<feature type="glycosylation site" description="N-linked (GlcNAc...) asparagine" evidence="2">
    <location>
        <position position="164"/>
    </location>
</feature>
<feature type="glycosylation site" description="N-linked (GlcNAc...) asparagine" evidence="2">
    <location>
        <position position="252"/>
    </location>
</feature>
<name>THBG_SHEEP</name>
<keyword id="KW-0325">Glycoprotein</keyword>
<keyword id="KW-1185">Reference proteome</keyword>
<keyword id="KW-0964">Secreted</keyword>
<keyword id="KW-0732">Signal</keyword>
<gene>
    <name type="primary">SERPINA7</name>
    <name type="synonym">TBG</name>
</gene>
<organism>
    <name type="scientific">Ovis aries</name>
    <name type="common">Sheep</name>
    <dbReference type="NCBI Taxonomy" id="9940"/>
    <lineage>
        <taxon>Eukaryota</taxon>
        <taxon>Metazoa</taxon>
        <taxon>Chordata</taxon>
        <taxon>Craniata</taxon>
        <taxon>Vertebrata</taxon>
        <taxon>Euteleostomi</taxon>
        <taxon>Mammalia</taxon>
        <taxon>Eutheria</taxon>
        <taxon>Laurasiatheria</taxon>
        <taxon>Artiodactyla</taxon>
        <taxon>Ruminantia</taxon>
        <taxon>Pecora</taxon>
        <taxon>Bovidae</taxon>
        <taxon>Caprinae</taxon>
        <taxon>Ovis</taxon>
    </lineage>
</organism>
<reference key="1">
    <citation type="journal article" date="1993" name="Mol. Cell. Endocrinol.">
        <title>Sheep thyroxine-binding globulin: cDNA sequence and expression.</title>
        <authorList>
            <person name="Tsykin A."/>
            <person name="Schreiber G."/>
        </authorList>
    </citation>
    <scope>NUCLEOTIDE SEQUENCE [MRNA]</scope>
    <source>
        <tissue>Liver</tissue>
    </source>
</reference>
<sequence>MPLFFSLVLLILGLHCAPPNSCEGKITSCLSPQQNATLYKMSSINADFAFNLYRKVTVETPDQNIFFSPVSISAGLAMLSLGACSSTQTQILESLGFNLTDTPMAEIQQGFQHLICSLNFPKKELELQMGNALFIGKQLKPLEKFLDDVKNLYETEVFSTDFSNVSAAQQEINSHVERQTKGKIVGLIQDLKPNTITVLVNYLCFKAQWANPFDPSKTEEGSSFLVDKTTTVQVPMMHQVDQYYHLVDTELNCTVLQMDYSKNALALFVLPKEGQMEGVEGAMSSKILKKWNRLLQKGWVNLFVPKFSISATYDLGGILLKMGIQDAFADNADFSGLTKDNGLKVSNVAHKAMFYIGEKGTEAIPEVRFLNQPETTLLHPIIQFDRSFLLLILEKNTRSILFLGKVVDPTEV</sequence>
<evidence type="ECO:0000250" key="1"/>
<evidence type="ECO:0000255" key="2"/>
<evidence type="ECO:0000305" key="3"/>
<proteinExistence type="evidence at transcript level"/>
<dbReference type="EMBL" id="X69795">
    <property type="protein sequence ID" value="CAA49450.1"/>
    <property type="molecule type" value="mRNA"/>
</dbReference>
<dbReference type="PIR" id="I46421">
    <property type="entry name" value="I46421"/>
</dbReference>
<dbReference type="RefSeq" id="NP_001094390.1">
    <property type="nucleotide sequence ID" value="NM_001100920.2"/>
</dbReference>
<dbReference type="SMR" id="P50450"/>
<dbReference type="STRING" id="9940.ENSOARP00000000857"/>
<dbReference type="MEROPS" id="I04.955"/>
<dbReference type="GlyCosmos" id="P50450">
    <property type="glycosylation" value="4 sites, No reported glycans"/>
</dbReference>
<dbReference type="PaxDb" id="9940-ENSOARP00000000857"/>
<dbReference type="GeneID" id="443462"/>
<dbReference type="KEGG" id="oas:443462"/>
<dbReference type="CTD" id="6906"/>
<dbReference type="eggNOG" id="KOG2392">
    <property type="taxonomic scope" value="Eukaryota"/>
</dbReference>
<dbReference type="OrthoDB" id="671595at2759"/>
<dbReference type="Proteomes" id="UP000002356">
    <property type="component" value="Unplaced"/>
</dbReference>
<dbReference type="GO" id="GO:0005615">
    <property type="term" value="C:extracellular space"/>
    <property type="evidence" value="ECO:0007669"/>
    <property type="project" value="InterPro"/>
</dbReference>
<dbReference type="GO" id="GO:0004867">
    <property type="term" value="F:serine-type endopeptidase inhibitor activity"/>
    <property type="evidence" value="ECO:0007669"/>
    <property type="project" value="InterPro"/>
</dbReference>
<dbReference type="CDD" id="cd19555">
    <property type="entry name" value="serpinA7_TBG"/>
    <property type="match status" value="1"/>
</dbReference>
<dbReference type="FunFam" id="2.30.39.10:FF:000003">
    <property type="entry name" value="alpha-1-antitrypsin isoform X1"/>
    <property type="match status" value="1"/>
</dbReference>
<dbReference type="FunFam" id="3.30.497.10:FF:000001">
    <property type="entry name" value="Serine protease inhibitor"/>
    <property type="match status" value="1"/>
</dbReference>
<dbReference type="FunFam" id="2.10.310.10:FF:000001">
    <property type="entry name" value="Serpin family A member 1"/>
    <property type="match status" value="1"/>
</dbReference>
<dbReference type="Gene3D" id="2.30.39.10">
    <property type="entry name" value="Alpha-1-antitrypsin, domain 1"/>
    <property type="match status" value="1"/>
</dbReference>
<dbReference type="Gene3D" id="3.30.497.10">
    <property type="entry name" value="Antithrombin, subunit I, domain 2"/>
    <property type="match status" value="1"/>
</dbReference>
<dbReference type="Gene3D" id="2.10.310.10">
    <property type="entry name" value="Serpins superfamily"/>
    <property type="match status" value="1"/>
</dbReference>
<dbReference type="InterPro" id="IPR023795">
    <property type="entry name" value="Serpin_CS"/>
</dbReference>
<dbReference type="InterPro" id="IPR023796">
    <property type="entry name" value="Serpin_dom"/>
</dbReference>
<dbReference type="InterPro" id="IPR000215">
    <property type="entry name" value="Serpin_fam"/>
</dbReference>
<dbReference type="InterPro" id="IPR036186">
    <property type="entry name" value="Serpin_sf"/>
</dbReference>
<dbReference type="InterPro" id="IPR042178">
    <property type="entry name" value="Serpin_sf_1"/>
</dbReference>
<dbReference type="InterPro" id="IPR042185">
    <property type="entry name" value="Serpin_sf_2"/>
</dbReference>
<dbReference type="PANTHER" id="PTHR11461">
    <property type="entry name" value="SERINE PROTEASE INHIBITOR, SERPIN"/>
    <property type="match status" value="1"/>
</dbReference>
<dbReference type="PANTHER" id="PTHR11461:SF375">
    <property type="entry name" value="THYROXINE-BINDING GLOBULIN"/>
    <property type="match status" value="1"/>
</dbReference>
<dbReference type="Pfam" id="PF00079">
    <property type="entry name" value="Serpin"/>
    <property type="match status" value="1"/>
</dbReference>
<dbReference type="SMART" id="SM00093">
    <property type="entry name" value="SERPIN"/>
    <property type="match status" value="1"/>
</dbReference>
<dbReference type="SUPFAM" id="SSF56574">
    <property type="entry name" value="Serpins"/>
    <property type="match status" value="1"/>
</dbReference>
<dbReference type="PROSITE" id="PS00284">
    <property type="entry name" value="SERPIN"/>
    <property type="match status" value="1"/>
</dbReference>